<sequence>MAQNAKHRVPFRRRREGKTDFRQRLGLLLSGKPRLVARKSLNNIIAQLMAYDEKGDIVLVSAHSRELVKMGYKGHCGNLPAAYLTGLLLGKKAVEEGLEEAILDKGLHRATKGAAIFAVLKGALDAGMDIPCGEEIIADEERLNGTHIKQYAELLKEDEEAYKKQFSKYLEKGLNPEDLPEHFEELKGKILNL</sequence>
<gene>
    <name evidence="1" type="primary">rpl18</name>
    <name type="ordered locus">Mevan_0729</name>
</gene>
<reference key="1">
    <citation type="submission" date="2007-06" db="EMBL/GenBank/DDBJ databases">
        <title>Complete sequence of Methanococcus vannielii SB.</title>
        <authorList>
            <consortium name="US DOE Joint Genome Institute"/>
            <person name="Copeland A."/>
            <person name="Lucas S."/>
            <person name="Lapidus A."/>
            <person name="Barry K."/>
            <person name="Glavina del Rio T."/>
            <person name="Dalin E."/>
            <person name="Tice H."/>
            <person name="Pitluck S."/>
            <person name="Chain P."/>
            <person name="Malfatti S."/>
            <person name="Shin M."/>
            <person name="Vergez L."/>
            <person name="Schmutz J."/>
            <person name="Larimer F."/>
            <person name="Land M."/>
            <person name="Hauser L."/>
            <person name="Kyrpides N."/>
            <person name="Anderson I."/>
            <person name="Sieprawska-Lupa M."/>
            <person name="Whitman W.B."/>
            <person name="Richardson P."/>
        </authorList>
    </citation>
    <scope>NUCLEOTIDE SEQUENCE [LARGE SCALE GENOMIC DNA]</scope>
    <source>
        <strain>ATCC 35089 / DSM 1224 / JCM 13029 / OCM 148 / SB</strain>
    </source>
</reference>
<accession>A6UQ63</accession>
<keyword id="KW-0687">Ribonucleoprotein</keyword>
<keyword id="KW-0689">Ribosomal protein</keyword>
<keyword id="KW-0694">RNA-binding</keyword>
<keyword id="KW-0699">rRNA-binding</keyword>
<feature type="chain" id="PRO_1000053063" description="Large ribosomal subunit protein uL18">
    <location>
        <begin position="1"/>
        <end position="193"/>
    </location>
</feature>
<organism>
    <name type="scientific">Methanococcus vannielii (strain ATCC 35089 / DSM 1224 / JCM 13029 / OCM 148 / SB)</name>
    <dbReference type="NCBI Taxonomy" id="406327"/>
    <lineage>
        <taxon>Archaea</taxon>
        <taxon>Methanobacteriati</taxon>
        <taxon>Methanobacteriota</taxon>
        <taxon>Methanomada group</taxon>
        <taxon>Methanococci</taxon>
        <taxon>Methanococcales</taxon>
        <taxon>Methanococcaceae</taxon>
        <taxon>Methanococcus</taxon>
    </lineage>
</organism>
<evidence type="ECO:0000255" key="1">
    <source>
        <dbReference type="HAMAP-Rule" id="MF_01337"/>
    </source>
</evidence>
<evidence type="ECO:0000305" key="2"/>
<dbReference type="EMBL" id="CP000742">
    <property type="protein sequence ID" value="ABR54635.1"/>
    <property type="molecule type" value="Genomic_DNA"/>
</dbReference>
<dbReference type="RefSeq" id="WP_011972537.1">
    <property type="nucleotide sequence ID" value="NC_009634.1"/>
</dbReference>
<dbReference type="SMR" id="A6UQ63"/>
<dbReference type="STRING" id="406327.Mevan_0729"/>
<dbReference type="GeneID" id="5325892"/>
<dbReference type="KEGG" id="mvn:Mevan_0729"/>
<dbReference type="eggNOG" id="arCOG04088">
    <property type="taxonomic scope" value="Archaea"/>
</dbReference>
<dbReference type="HOGENOM" id="CLU_056222_2_0_2"/>
<dbReference type="OrthoDB" id="8644at2157"/>
<dbReference type="Proteomes" id="UP000001107">
    <property type="component" value="Chromosome"/>
</dbReference>
<dbReference type="GO" id="GO:0022625">
    <property type="term" value="C:cytosolic large ribosomal subunit"/>
    <property type="evidence" value="ECO:0007669"/>
    <property type="project" value="TreeGrafter"/>
</dbReference>
<dbReference type="GO" id="GO:0008097">
    <property type="term" value="F:5S rRNA binding"/>
    <property type="evidence" value="ECO:0007669"/>
    <property type="project" value="InterPro"/>
</dbReference>
<dbReference type="GO" id="GO:0003735">
    <property type="term" value="F:structural constituent of ribosome"/>
    <property type="evidence" value="ECO:0007669"/>
    <property type="project" value="InterPro"/>
</dbReference>
<dbReference type="GO" id="GO:0000027">
    <property type="term" value="P:ribosomal large subunit assembly"/>
    <property type="evidence" value="ECO:0007669"/>
    <property type="project" value="TreeGrafter"/>
</dbReference>
<dbReference type="GO" id="GO:0006412">
    <property type="term" value="P:translation"/>
    <property type="evidence" value="ECO:0007669"/>
    <property type="project" value="UniProtKB-UniRule"/>
</dbReference>
<dbReference type="CDD" id="cd00432">
    <property type="entry name" value="Ribosomal_L18_L5e"/>
    <property type="match status" value="1"/>
</dbReference>
<dbReference type="Gene3D" id="3.30.420.100">
    <property type="match status" value="1"/>
</dbReference>
<dbReference type="HAMAP" id="MF_01337_A">
    <property type="entry name" value="Ribosomal_uL18_A"/>
    <property type="match status" value="1"/>
</dbReference>
<dbReference type="InterPro" id="IPR005485">
    <property type="entry name" value="Rbsml_uL18_euk"/>
</dbReference>
<dbReference type="NCBIfam" id="NF006342">
    <property type="entry name" value="PRK08569.1"/>
    <property type="match status" value="1"/>
</dbReference>
<dbReference type="PANTHER" id="PTHR23410:SF12">
    <property type="entry name" value="LARGE RIBOSOMAL SUBUNIT PROTEIN UL18"/>
    <property type="match status" value="1"/>
</dbReference>
<dbReference type="PANTHER" id="PTHR23410">
    <property type="entry name" value="RIBOSOMAL PROTEIN L5-RELATED"/>
    <property type="match status" value="1"/>
</dbReference>
<dbReference type="Pfam" id="PF17144">
    <property type="entry name" value="Ribosomal_L5e"/>
    <property type="match status" value="2"/>
</dbReference>
<dbReference type="SUPFAM" id="SSF53137">
    <property type="entry name" value="Translational machinery components"/>
    <property type="match status" value="1"/>
</dbReference>
<name>RL18_METVS</name>
<proteinExistence type="inferred from homology"/>
<protein>
    <recommendedName>
        <fullName evidence="1">Large ribosomal subunit protein uL18</fullName>
    </recommendedName>
    <alternativeName>
        <fullName evidence="2">50S ribosomal protein L18</fullName>
    </alternativeName>
</protein>
<comment type="function">
    <text evidence="1">This is one of the proteins that bind and probably mediate the attachment of the 5S RNA into the large ribosomal subunit, where it forms part of the central protuberance.</text>
</comment>
<comment type="subunit">
    <text evidence="1">Part of the 50S ribosomal subunit. Contacts the 5S and 23S rRNAs.</text>
</comment>
<comment type="similarity">
    <text evidence="1">Belongs to the universal ribosomal protein uL18 family.</text>
</comment>